<keyword id="KW-0001">2Fe-2S</keyword>
<keyword id="KW-0963">Cytoplasm</keyword>
<keyword id="KW-0408">Iron</keyword>
<keyword id="KW-0411">Iron-sulfur</keyword>
<keyword id="KW-0479">Metal-binding</keyword>
<keyword id="KW-0676">Redox-active center</keyword>
<keyword id="KW-1185">Reference proteome</keyword>
<feature type="chain" id="PRO_0000268722" description="Monothiol glutaredoxin-S1">
    <location>
        <begin position="1"/>
        <end position="102"/>
    </location>
</feature>
<feature type="domain" description="Glutaredoxin" evidence="3">
    <location>
        <begin position="1"/>
        <end position="101"/>
    </location>
</feature>
<feature type="binding site" evidence="2">
    <location>
        <position position="21"/>
    </location>
    <ligand>
        <name>[2Fe-2S] cluster</name>
        <dbReference type="ChEBI" id="CHEBI:190135"/>
        <note>ligand shared between dimeric partners</note>
    </ligand>
</feature>
<name>GRXS1_ARATH</name>
<accession>Q9SA68</accession>
<accession>C1JGR2</accession>
<protein>
    <recommendedName>
        <fullName>Monothiol glutaredoxin-S1</fullName>
        <shortName>AtGrxS1</shortName>
    </recommendedName>
    <alternativeName>
        <fullName>Protein ROXY 16</fullName>
    </alternativeName>
</protein>
<comment type="function">
    <text evidence="4">May only reduce GSH-thiol disulfides, but not protein disulfides.</text>
</comment>
<comment type="subcellular location">
    <subcellularLocation>
        <location evidence="1">Cytoplasm</location>
    </subcellularLocation>
</comment>
<comment type="similarity">
    <text evidence="4">Belongs to the glutaredoxin family. CC-type subfamily.</text>
</comment>
<sequence>MEKISNLLEDKPVVIFSKTSCCMSHSIKSLISGYGANSTVYELDEMSNGPEIERALVELGCKPTVPAVFIGQELVGGANQLMSLQVRNQLASLLRRAGAIWI</sequence>
<reference key="1">
    <citation type="journal article" date="2009" name="Plant Cell">
        <title>Nuclear activity of ROXY1, a glutaredoxin interacting with TGA factors, is required for petal development in Arabidopsis thaliana.</title>
        <authorList>
            <person name="Li S."/>
            <person name="Lauri A."/>
            <person name="Ziemann M."/>
            <person name="Busch A."/>
            <person name="Bhave M."/>
            <person name="Zachgo S."/>
        </authorList>
    </citation>
    <scope>NUCLEOTIDE SEQUENCE [MRNA]</scope>
    <scope>GENE FAMILY</scope>
</reference>
<reference key="2">
    <citation type="journal article" date="2000" name="Nature">
        <title>Sequence and analysis of chromosome 1 of the plant Arabidopsis thaliana.</title>
        <authorList>
            <person name="Theologis A."/>
            <person name="Ecker J.R."/>
            <person name="Palm C.J."/>
            <person name="Federspiel N.A."/>
            <person name="Kaul S."/>
            <person name="White O."/>
            <person name="Alonso J."/>
            <person name="Altafi H."/>
            <person name="Araujo R."/>
            <person name="Bowman C.L."/>
            <person name="Brooks S.Y."/>
            <person name="Buehler E."/>
            <person name="Chan A."/>
            <person name="Chao Q."/>
            <person name="Chen H."/>
            <person name="Cheuk R.F."/>
            <person name="Chin C.W."/>
            <person name="Chung M.K."/>
            <person name="Conn L."/>
            <person name="Conway A.B."/>
            <person name="Conway A.R."/>
            <person name="Creasy T.H."/>
            <person name="Dewar K."/>
            <person name="Dunn P."/>
            <person name="Etgu P."/>
            <person name="Feldblyum T.V."/>
            <person name="Feng J.-D."/>
            <person name="Fong B."/>
            <person name="Fujii C.Y."/>
            <person name="Gill J.E."/>
            <person name="Goldsmith A.D."/>
            <person name="Haas B."/>
            <person name="Hansen N.F."/>
            <person name="Hughes B."/>
            <person name="Huizar L."/>
            <person name="Hunter J.L."/>
            <person name="Jenkins J."/>
            <person name="Johnson-Hopson C."/>
            <person name="Khan S."/>
            <person name="Khaykin E."/>
            <person name="Kim C.J."/>
            <person name="Koo H.L."/>
            <person name="Kremenetskaia I."/>
            <person name="Kurtz D.B."/>
            <person name="Kwan A."/>
            <person name="Lam B."/>
            <person name="Langin-Hooper S."/>
            <person name="Lee A."/>
            <person name="Lee J.M."/>
            <person name="Lenz C.A."/>
            <person name="Li J.H."/>
            <person name="Li Y.-P."/>
            <person name="Lin X."/>
            <person name="Liu S.X."/>
            <person name="Liu Z.A."/>
            <person name="Luros J.S."/>
            <person name="Maiti R."/>
            <person name="Marziali A."/>
            <person name="Militscher J."/>
            <person name="Miranda M."/>
            <person name="Nguyen M."/>
            <person name="Nierman W.C."/>
            <person name="Osborne B.I."/>
            <person name="Pai G."/>
            <person name="Peterson J."/>
            <person name="Pham P.K."/>
            <person name="Rizzo M."/>
            <person name="Rooney T."/>
            <person name="Rowley D."/>
            <person name="Sakano H."/>
            <person name="Salzberg S.L."/>
            <person name="Schwartz J.R."/>
            <person name="Shinn P."/>
            <person name="Southwick A.M."/>
            <person name="Sun H."/>
            <person name="Tallon L.J."/>
            <person name="Tambunga G."/>
            <person name="Toriumi M.J."/>
            <person name="Town C.D."/>
            <person name="Utterback T."/>
            <person name="Van Aken S."/>
            <person name="Vaysberg M."/>
            <person name="Vysotskaia V.S."/>
            <person name="Walker M."/>
            <person name="Wu D."/>
            <person name="Yu G."/>
            <person name="Fraser C.M."/>
            <person name="Venter J.C."/>
            <person name="Davis R.W."/>
        </authorList>
    </citation>
    <scope>NUCLEOTIDE SEQUENCE [LARGE SCALE GENOMIC DNA]</scope>
    <source>
        <strain>cv. Columbia</strain>
    </source>
</reference>
<reference key="3">
    <citation type="journal article" date="2017" name="Plant J.">
        <title>Araport11: a complete reannotation of the Arabidopsis thaliana reference genome.</title>
        <authorList>
            <person name="Cheng C.Y."/>
            <person name="Krishnakumar V."/>
            <person name="Chan A.P."/>
            <person name="Thibaud-Nissen F."/>
            <person name="Schobel S."/>
            <person name="Town C.D."/>
        </authorList>
    </citation>
    <scope>GENOME REANNOTATION</scope>
    <source>
        <strain>cv. Columbia</strain>
    </source>
</reference>
<reference key="4">
    <citation type="journal article" date="2004" name="Cell. Mol. Life Sci.">
        <title>Plant glutaredoxins: still mysterious reducing systems.</title>
        <authorList>
            <person name="Rouhier N."/>
            <person name="Gelhaye E."/>
            <person name="Jacquot J.-P."/>
        </authorList>
    </citation>
    <scope>GENE FAMILY</scope>
    <scope>NOMENCLATURE</scope>
</reference>
<reference key="5">
    <citation type="journal article" date="2006" name="J. Exp. Bot.">
        <title>Genome-wide analysis of plant glutaredoxin systems.</title>
        <authorList>
            <person name="Rouhier N."/>
            <person name="Couturier J."/>
            <person name="Jacquot J.-P."/>
        </authorList>
    </citation>
    <scope>GENE FAMILY</scope>
</reference>
<evidence type="ECO:0000250" key="1"/>
<evidence type="ECO:0000255" key="2"/>
<evidence type="ECO:0000255" key="3">
    <source>
        <dbReference type="PROSITE-ProRule" id="PRU00686"/>
    </source>
</evidence>
<evidence type="ECO:0000305" key="4"/>
<dbReference type="EMBL" id="FJ611921">
    <property type="protein sequence ID" value="ACO50426.1"/>
    <property type="molecule type" value="mRNA"/>
</dbReference>
<dbReference type="EMBL" id="AC006550">
    <property type="protein sequence ID" value="AAD25807.1"/>
    <property type="molecule type" value="Genomic_DNA"/>
</dbReference>
<dbReference type="EMBL" id="CP002684">
    <property type="protein sequence ID" value="AEE27515.1"/>
    <property type="molecule type" value="Genomic_DNA"/>
</dbReference>
<dbReference type="PIR" id="H86160">
    <property type="entry name" value="H86160"/>
</dbReference>
<dbReference type="RefSeq" id="NP_171801.1">
    <property type="nucleotide sequence ID" value="NM_100183.2"/>
</dbReference>
<dbReference type="SMR" id="Q9SA68"/>
<dbReference type="BioGRID" id="24740">
    <property type="interactions" value="1"/>
</dbReference>
<dbReference type="FunCoup" id="Q9SA68">
    <property type="interactions" value="34"/>
</dbReference>
<dbReference type="STRING" id="3702.Q9SA68"/>
<dbReference type="PaxDb" id="3702-AT1G03020.1"/>
<dbReference type="EnsemblPlants" id="AT1G03020.1">
    <property type="protein sequence ID" value="AT1G03020.1"/>
    <property type="gene ID" value="AT1G03020"/>
</dbReference>
<dbReference type="GeneID" id="839505"/>
<dbReference type="Gramene" id="AT1G03020.1">
    <property type="protein sequence ID" value="AT1G03020.1"/>
    <property type="gene ID" value="AT1G03020"/>
</dbReference>
<dbReference type="KEGG" id="ath:AT1G03020"/>
<dbReference type="Araport" id="AT1G03020"/>
<dbReference type="TAIR" id="AT1G03020">
    <property type="gene designation" value="GRXS1"/>
</dbReference>
<dbReference type="eggNOG" id="KOG1752">
    <property type="taxonomic scope" value="Eukaryota"/>
</dbReference>
<dbReference type="HOGENOM" id="CLU_026126_6_0_1"/>
<dbReference type="InParanoid" id="Q9SA68"/>
<dbReference type="OMA" id="YELYHIR"/>
<dbReference type="OrthoDB" id="418495at2759"/>
<dbReference type="PhylomeDB" id="Q9SA68"/>
<dbReference type="PRO" id="PR:Q9SA68"/>
<dbReference type="Proteomes" id="UP000006548">
    <property type="component" value="Chromosome 1"/>
</dbReference>
<dbReference type="ExpressionAtlas" id="Q9SA68">
    <property type="expression patterns" value="baseline and differential"/>
</dbReference>
<dbReference type="GO" id="GO:0005737">
    <property type="term" value="C:cytoplasm"/>
    <property type="evidence" value="ECO:0007669"/>
    <property type="project" value="UniProtKB-SubCell"/>
</dbReference>
<dbReference type="GO" id="GO:0051537">
    <property type="term" value="F:2 iron, 2 sulfur cluster binding"/>
    <property type="evidence" value="ECO:0007669"/>
    <property type="project" value="UniProtKB-KW"/>
</dbReference>
<dbReference type="GO" id="GO:0046872">
    <property type="term" value="F:metal ion binding"/>
    <property type="evidence" value="ECO:0007669"/>
    <property type="project" value="UniProtKB-KW"/>
</dbReference>
<dbReference type="GO" id="GO:0010167">
    <property type="term" value="P:response to nitrate"/>
    <property type="evidence" value="ECO:0000270"/>
    <property type="project" value="TAIR"/>
</dbReference>
<dbReference type="CDD" id="cd03419">
    <property type="entry name" value="GRX_GRXh_1_2_like"/>
    <property type="match status" value="1"/>
</dbReference>
<dbReference type="Gene3D" id="3.40.30.10">
    <property type="entry name" value="Glutaredoxin"/>
    <property type="match status" value="1"/>
</dbReference>
<dbReference type="InterPro" id="IPR011905">
    <property type="entry name" value="GlrX-like_pln_2"/>
</dbReference>
<dbReference type="InterPro" id="IPR002109">
    <property type="entry name" value="Glutaredoxin"/>
</dbReference>
<dbReference type="InterPro" id="IPR014025">
    <property type="entry name" value="Glutaredoxin_subgr"/>
</dbReference>
<dbReference type="InterPro" id="IPR036249">
    <property type="entry name" value="Thioredoxin-like_sf"/>
</dbReference>
<dbReference type="NCBIfam" id="TIGR02189">
    <property type="entry name" value="GlrX-like_plant"/>
    <property type="match status" value="1"/>
</dbReference>
<dbReference type="PANTHER" id="PTHR10168">
    <property type="entry name" value="GLUTAREDOXIN"/>
    <property type="match status" value="1"/>
</dbReference>
<dbReference type="Pfam" id="PF00462">
    <property type="entry name" value="Glutaredoxin"/>
    <property type="match status" value="1"/>
</dbReference>
<dbReference type="PRINTS" id="PR00160">
    <property type="entry name" value="GLUTAREDOXIN"/>
</dbReference>
<dbReference type="SUPFAM" id="SSF52833">
    <property type="entry name" value="Thioredoxin-like"/>
    <property type="match status" value="1"/>
</dbReference>
<dbReference type="PROSITE" id="PS51354">
    <property type="entry name" value="GLUTAREDOXIN_2"/>
    <property type="match status" value="1"/>
</dbReference>
<proteinExistence type="inferred from homology"/>
<organism>
    <name type="scientific">Arabidopsis thaliana</name>
    <name type="common">Mouse-ear cress</name>
    <dbReference type="NCBI Taxonomy" id="3702"/>
    <lineage>
        <taxon>Eukaryota</taxon>
        <taxon>Viridiplantae</taxon>
        <taxon>Streptophyta</taxon>
        <taxon>Embryophyta</taxon>
        <taxon>Tracheophyta</taxon>
        <taxon>Spermatophyta</taxon>
        <taxon>Magnoliopsida</taxon>
        <taxon>eudicotyledons</taxon>
        <taxon>Gunneridae</taxon>
        <taxon>Pentapetalae</taxon>
        <taxon>rosids</taxon>
        <taxon>malvids</taxon>
        <taxon>Brassicales</taxon>
        <taxon>Brassicaceae</taxon>
        <taxon>Camelineae</taxon>
        <taxon>Arabidopsis</taxon>
    </lineage>
</organism>
<gene>
    <name type="primary">GRXS1</name>
    <name type="synonym">ROXY16</name>
    <name type="ordered locus">At1g03020</name>
    <name type="ORF">F10O3.15</name>
    <name type="ORF">F10O3.16</name>
</gene>